<feature type="chain" id="PRO_0000197277" description="Metallothionein A">
    <location>
        <begin position="1"/>
        <end position="60"/>
    </location>
</feature>
<feature type="region of interest" description="Beta">
    <location>
        <begin position="1"/>
        <end position="28"/>
    </location>
</feature>
<feature type="region of interest" description="Alpha">
    <location>
        <begin position="29"/>
        <end position="60"/>
    </location>
</feature>
<feature type="binding site" evidence="2">
    <location>
        <position position="4"/>
    </location>
    <ligand>
        <name>a divalent metal cation</name>
        <dbReference type="ChEBI" id="CHEBI:60240"/>
        <label>1</label>
        <note>in cluster B</note>
    </ligand>
</feature>
<feature type="binding site" evidence="2">
    <location>
        <position position="6"/>
    </location>
    <ligand>
        <name>a divalent metal cation</name>
        <dbReference type="ChEBI" id="CHEBI:60240"/>
        <label>1</label>
        <note>in cluster B</note>
    </ligand>
</feature>
<feature type="binding site" evidence="2">
    <location>
        <position position="6"/>
    </location>
    <ligand>
        <name>a divalent metal cation</name>
        <dbReference type="ChEBI" id="CHEBI:60240"/>
        <label>2</label>
        <note>in cluster B</note>
    </ligand>
</feature>
<feature type="binding site" evidence="2">
    <location>
        <position position="12"/>
    </location>
    <ligand>
        <name>a divalent metal cation</name>
        <dbReference type="ChEBI" id="CHEBI:60240"/>
        <label>2</label>
        <note>in cluster B</note>
    </ligand>
</feature>
<feature type="binding site" evidence="2">
    <location>
        <position position="14"/>
    </location>
    <ligand>
        <name>a divalent metal cation</name>
        <dbReference type="ChEBI" id="CHEBI:60240"/>
        <label>2</label>
        <note>in cluster B</note>
    </ligand>
</feature>
<feature type="binding site" evidence="2">
    <location>
        <position position="14"/>
    </location>
    <ligand>
        <name>a divalent metal cation</name>
        <dbReference type="ChEBI" id="CHEBI:60240"/>
        <label>3</label>
        <note>in cluster B</note>
    </ligand>
</feature>
<feature type="binding site" evidence="2">
    <location>
        <position position="18"/>
    </location>
    <ligand>
        <name>a divalent metal cation</name>
        <dbReference type="ChEBI" id="CHEBI:60240"/>
        <label>3</label>
        <note>in cluster B</note>
    </ligand>
</feature>
<feature type="binding site" evidence="2">
    <location>
        <position position="20"/>
    </location>
    <ligand>
        <name>a divalent metal cation</name>
        <dbReference type="ChEBI" id="CHEBI:60240"/>
        <label>1</label>
        <note>in cluster B</note>
    </ligand>
</feature>
<feature type="binding site" evidence="2">
    <location>
        <position position="23"/>
    </location>
    <ligand>
        <name>a divalent metal cation</name>
        <dbReference type="ChEBI" id="CHEBI:60240"/>
        <label>1</label>
        <note>in cluster B</note>
    </ligand>
</feature>
<feature type="binding site" evidence="2">
    <location>
        <position position="23"/>
    </location>
    <ligand>
        <name>a divalent metal cation</name>
        <dbReference type="ChEBI" id="CHEBI:60240"/>
        <label>3</label>
        <note>in cluster B</note>
    </ligand>
</feature>
<feature type="binding site" evidence="2">
    <location>
        <position position="25"/>
    </location>
    <ligand>
        <name>a divalent metal cation</name>
        <dbReference type="ChEBI" id="CHEBI:60240"/>
        <label>2</label>
        <note>in cluster B</note>
    </ligand>
</feature>
<feature type="binding site" evidence="2">
    <location>
        <position position="28"/>
    </location>
    <ligand>
        <name>a divalent metal cation</name>
        <dbReference type="ChEBI" id="CHEBI:60240"/>
        <label>3</label>
        <note>in cluster B</note>
    </ligand>
</feature>
<feature type="binding site" evidence="2">
    <location>
        <position position="32"/>
    </location>
    <ligand>
        <name>a divalent metal cation</name>
        <dbReference type="ChEBI" id="CHEBI:60240"/>
        <label>4</label>
        <note>in cluster A</note>
    </ligand>
</feature>
<feature type="binding site" evidence="2">
    <location>
        <position position="33"/>
    </location>
    <ligand>
        <name>a divalent metal cation</name>
        <dbReference type="ChEBI" id="CHEBI:60240"/>
        <label>4</label>
        <note>in cluster A</note>
    </ligand>
</feature>
<feature type="binding site" evidence="2">
    <location>
        <position position="33"/>
    </location>
    <ligand>
        <name>a divalent metal cation</name>
        <dbReference type="ChEBI" id="CHEBI:60240"/>
        <label>5</label>
        <note>in cluster A</note>
    </ligand>
</feature>
<feature type="binding site" evidence="2">
    <location>
        <position position="35"/>
    </location>
    <ligand>
        <name>a divalent metal cation</name>
        <dbReference type="ChEBI" id="CHEBI:60240"/>
        <label>5</label>
        <note>in cluster A</note>
    </ligand>
</feature>
<feature type="binding site" evidence="2">
    <location>
        <position position="36"/>
    </location>
    <ligand>
        <name>a divalent metal cation</name>
        <dbReference type="ChEBI" id="CHEBI:60240"/>
        <label>5</label>
        <note>in cluster A</note>
    </ligand>
</feature>
<feature type="binding site" evidence="2">
    <location>
        <position position="36"/>
    </location>
    <ligand>
        <name>a divalent metal cation</name>
        <dbReference type="ChEBI" id="CHEBI:60240"/>
        <label>6</label>
        <note>in cluster A</note>
    </ligand>
</feature>
<feature type="binding site" evidence="2">
    <location>
        <position position="40"/>
    </location>
    <ligand>
        <name>a divalent metal cation</name>
        <dbReference type="ChEBI" id="CHEBI:60240"/>
        <label>6</label>
        <note>in cluster A</note>
    </ligand>
</feature>
<feature type="binding site" evidence="2">
    <location>
        <position position="43"/>
    </location>
    <ligand>
        <name>a divalent metal cation</name>
        <dbReference type="ChEBI" id="CHEBI:60240"/>
        <label>4</label>
        <note>in cluster A</note>
    </ligand>
</feature>
<feature type="binding site" evidence="2">
    <location>
        <position position="43"/>
    </location>
    <ligand>
        <name>a divalent metal cation</name>
        <dbReference type="ChEBI" id="CHEBI:60240"/>
        <label>6</label>
        <note>in cluster A</note>
    </ligand>
</feature>
<feature type="binding site" evidence="2">
    <location>
        <position position="47"/>
    </location>
    <ligand>
        <name>a divalent metal cation</name>
        <dbReference type="ChEBI" id="CHEBI:60240"/>
        <label>4</label>
        <note>in cluster A</note>
    </ligand>
</feature>
<feature type="binding site" evidence="2">
    <location>
        <position position="49"/>
    </location>
    <ligand>
        <name>a divalent metal cation</name>
        <dbReference type="ChEBI" id="CHEBI:60240"/>
        <label>5</label>
        <note>in cluster A</note>
    </ligand>
</feature>
<feature type="binding site" evidence="2">
    <location>
        <position position="49"/>
    </location>
    <ligand>
        <name>a divalent metal cation</name>
        <dbReference type="ChEBI" id="CHEBI:60240"/>
        <label>7</label>
        <note>in cluster A</note>
    </ligand>
</feature>
<feature type="binding site" evidence="3">
    <location>
        <position position="54"/>
    </location>
    <ligand>
        <name>a divalent metal cation</name>
        <dbReference type="ChEBI" id="CHEBI:60240"/>
        <label>7</label>
        <note>in cluster A</note>
    </ligand>
</feature>
<feature type="binding site" evidence="2">
    <location>
        <position position="58"/>
    </location>
    <ligand>
        <name>a divalent metal cation</name>
        <dbReference type="ChEBI" id="CHEBI:60240"/>
        <label>7</label>
        <note>in cluster A</note>
    </ligand>
</feature>
<feature type="binding site" evidence="2">
    <location>
        <position position="59"/>
    </location>
    <ligand>
        <name>a divalent metal cation</name>
        <dbReference type="ChEBI" id="CHEBI:60240"/>
        <label>6</label>
        <note>in cluster A</note>
    </ligand>
</feature>
<feature type="binding site" evidence="2">
    <location>
        <position position="59"/>
    </location>
    <ligand>
        <name>a divalent metal cation</name>
        <dbReference type="ChEBI" id="CHEBI:60240"/>
        <label>7</label>
        <note>in cluster A</note>
    </ligand>
</feature>
<proteinExistence type="inferred from homology"/>
<evidence type="ECO:0000250" key="1"/>
<evidence type="ECO:0000250" key="2">
    <source>
        <dbReference type="UniProtKB" id="P02795"/>
    </source>
</evidence>
<evidence type="ECO:0000250" key="3">
    <source>
        <dbReference type="UniProtKB" id="P62339"/>
    </source>
</evidence>
<evidence type="ECO:0000305" key="4"/>
<sequence length="60" mass="6019">MDPCECSKSGTCNCGGSCTCTNCSCKSCKKSCCPCCPSGCTKCASGCVCKGKTCDTSCCQ</sequence>
<organism>
    <name type="scientific">Chionodraco rastrospinosus</name>
    <name type="common">Ocellated icefish</name>
    <dbReference type="NCBI Taxonomy" id="34790"/>
    <lineage>
        <taxon>Eukaryota</taxon>
        <taxon>Metazoa</taxon>
        <taxon>Chordata</taxon>
        <taxon>Craniata</taxon>
        <taxon>Vertebrata</taxon>
        <taxon>Euteleostomi</taxon>
        <taxon>Actinopterygii</taxon>
        <taxon>Neopterygii</taxon>
        <taxon>Teleostei</taxon>
        <taxon>Neoteleostei</taxon>
        <taxon>Acanthomorphata</taxon>
        <taxon>Eupercaria</taxon>
        <taxon>Perciformes</taxon>
        <taxon>Notothenioidei</taxon>
        <taxon>Channichthyidae</taxon>
        <taxon>Chionodraco</taxon>
    </lineage>
</organism>
<gene>
    <name type="primary">mta</name>
</gene>
<name>MTA_CHIRA</name>
<keyword id="KW-0479">Metal-binding</keyword>
<keyword id="KW-0480">Metal-thiolate cluster</keyword>
<dbReference type="EMBL" id="AJ011584">
    <property type="protein sequence ID" value="CAA09714.1"/>
    <property type="molecule type" value="mRNA"/>
</dbReference>
<dbReference type="SMR" id="P62338"/>
<dbReference type="GO" id="GO:0046872">
    <property type="term" value="F:metal ion binding"/>
    <property type="evidence" value="ECO:0007669"/>
    <property type="project" value="UniProtKB-KW"/>
</dbReference>
<dbReference type="FunFam" id="4.10.10.10:FF:000001">
    <property type="entry name" value="Metallothionein"/>
    <property type="match status" value="1"/>
</dbReference>
<dbReference type="Gene3D" id="4.10.10.10">
    <property type="entry name" value="Metallothionein Isoform II"/>
    <property type="match status" value="1"/>
</dbReference>
<dbReference type="InterPro" id="IPR017854">
    <property type="entry name" value="Metalthion_dom_sf"/>
</dbReference>
<dbReference type="InterPro" id="IPR023587">
    <property type="entry name" value="Metalthion_dom_sf_vert"/>
</dbReference>
<dbReference type="InterPro" id="IPR000006">
    <property type="entry name" value="Metalthion_vert"/>
</dbReference>
<dbReference type="InterPro" id="IPR018064">
    <property type="entry name" value="Metalthion_vert_metal_BS"/>
</dbReference>
<dbReference type="PANTHER" id="PTHR23299">
    <property type="entry name" value="METALLOTHIONEIN"/>
    <property type="match status" value="1"/>
</dbReference>
<dbReference type="PANTHER" id="PTHR23299:SF24">
    <property type="entry name" value="METALLOTHIONEIN-1X"/>
    <property type="match status" value="1"/>
</dbReference>
<dbReference type="Pfam" id="PF00131">
    <property type="entry name" value="Metallothio"/>
    <property type="match status" value="1"/>
</dbReference>
<dbReference type="PRINTS" id="PR00860">
    <property type="entry name" value="MTVERTEBRATE"/>
</dbReference>
<dbReference type="SUPFAM" id="SSF57868">
    <property type="entry name" value="Metallothionein"/>
    <property type="match status" value="1"/>
</dbReference>
<dbReference type="PROSITE" id="PS00203">
    <property type="entry name" value="METALLOTHIONEIN_VRT"/>
    <property type="match status" value="1"/>
</dbReference>
<comment type="function">
    <text evidence="1">Metallothioneins have a high content of cysteine residues that bind various heavy metals.</text>
</comment>
<comment type="domain">
    <text>Class I metallothioneins contain 2 metal-binding domains: four divalent ions are chelated within cluster A of the alpha domain and are coordinated via cysteinyl thiolate bridges to 11 cysteine ligands. Cluster B, the corresponding region within the beta domain, can ligate three divalent ions to 9 cysteines.</text>
</comment>
<comment type="similarity">
    <text evidence="4">Belongs to the metallothionein superfamily. Type 1 family.</text>
</comment>
<accession>P62338</accession>
<accession>O73914</accession>
<protein>
    <recommendedName>
        <fullName>Metallothionein A</fullName>
        <shortName>MT-A</shortName>
    </recommendedName>
</protein>
<reference key="1">
    <citation type="journal article" date="1999" name="Mol. Biol. Evol.">
        <title>Metallothioneins in antarctic fish: evidence for independent duplication and gene conversion.</title>
        <authorList>
            <person name="Bargelloni L."/>
            <person name="Scudiero R."/>
            <person name="Parisi E."/>
            <person name="Carginale V."/>
            <person name="Capasso C."/>
            <person name="Patarnello T."/>
        </authorList>
    </citation>
    <scope>NUCLEOTIDE SEQUENCE [MRNA]</scope>
    <source>
        <tissue>Liver</tissue>
    </source>
</reference>